<sequence length="309" mass="34069">MAKTYIFGHKNPDTDAISSAIIMAEFEQLRGNSGAKAYRLGDVSAETQFALDTFNVPAPELLTDDLDGQDVILVDHNEFQQSSDTIASATIKHVIDHHRIANFETAGPLCYRAEPVGCTATILYKMFRERGFEIKPEIAGLMLSAIISDSLLFKSPTCTQQDVKAAEELKDIAKVDIQKYGLDMLKAGASTTDKSVEFLLNMDAKSFTMGDYVTRIAQVNAVDLDEVLNRKEDLEKEMLAVSAQEKYDLFVLVVTDIINSDSKILVVGAEKDKVGEAFNVQLEDDMAFLSGVVSRKKQIVPQITEALTK</sequence>
<dbReference type="EC" id="3.6.1.1" evidence="1"/>
<dbReference type="EMBL" id="BA000033">
    <property type="protein sequence ID" value="BAB95725.1"/>
    <property type="molecule type" value="Genomic_DNA"/>
</dbReference>
<dbReference type="RefSeq" id="WP_001140871.1">
    <property type="nucleotide sequence ID" value="NC_003923.1"/>
</dbReference>
<dbReference type="SMR" id="P65754"/>
<dbReference type="KEGG" id="sam:MW1860"/>
<dbReference type="HOGENOM" id="CLU_025243_0_1_9"/>
<dbReference type="GO" id="GO:0005737">
    <property type="term" value="C:cytoplasm"/>
    <property type="evidence" value="ECO:0007669"/>
    <property type="project" value="UniProtKB-SubCell"/>
</dbReference>
<dbReference type="GO" id="GO:0004427">
    <property type="term" value="F:inorganic diphosphate phosphatase activity"/>
    <property type="evidence" value="ECO:0007669"/>
    <property type="project" value="UniProtKB-UniRule"/>
</dbReference>
<dbReference type="GO" id="GO:0030145">
    <property type="term" value="F:manganese ion binding"/>
    <property type="evidence" value="ECO:0007669"/>
    <property type="project" value="UniProtKB-UniRule"/>
</dbReference>
<dbReference type="FunFam" id="3.10.310.20:FF:000001">
    <property type="entry name" value="Probable manganese-dependent inorganic pyrophosphatase"/>
    <property type="match status" value="1"/>
</dbReference>
<dbReference type="FunFam" id="3.90.1640.10:FF:000001">
    <property type="entry name" value="Probable manganese-dependent inorganic pyrophosphatase"/>
    <property type="match status" value="1"/>
</dbReference>
<dbReference type="Gene3D" id="3.10.310.20">
    <property type="entry name" value="DHHA2 domain"/>
    <property type="match status" value="1"/>
</dbReference>
<dbReference type="Gene3D" id="3.90.1640.10">
    <property type="entry name" value="inorganic pyrophosphatase (n-terminal core)"/>
    <property type="match status" value="1"/>
</dbReference>
<dbReference type="HAMAP" id="MF_00207">
    <property type="entry name" value="PPase_C"/>
    <property type="match status" value="1"/>
</dbReference>
<dbReference type="InterPro" id="IPR001667">
    <property type="entry name" value="DDH_dom"/>
</dbReference>
<dbReference type="InterPro" id="IPR038763">
    <property type="entry name" value="DHH_sf"/>
</dbReference>
<dbReference type="InterPro" id="IPR004097">
    <property type="entry name" value="DHHA2"/>
</dbReference>
<dbReference type="InterPro" id="IPR038222">
    <property type="entry name" value="DHHA2_dom_sf"/>
</dbReference>
<dbReference type="InterPro" id="IPR022934">
    <property type="entry name" value="Mn-dep_inorganic_PyrPase"/>
</dbReference>
<dbReference type="NCBIfam" id="NF003877">
    <property type="entry name" value="PRK05427.1"/>
    <property type="match status" value="1"/>
</dbReference>
<dbReference type="PANTHER" id="PTHR12112">
    <property type="entry name" value="BNIP - RELATED"/>
    <property type="match status" value="1"/>
</dbReference>
<dbReference type="PANTHER" id="PTHR12112:SF22">
    <property type="entry name" value="MANGANESE-DEPENDENT INORGANIC PYROPHOSPHATASE-RELATED"/>
    <property type="match status" value="1"/>
</dbReference>
<dbReference type="Pfam" id="PF01368">
    <property type="entry name" value="DHH"/>
    <property type="match status" value="1"/>
</dbReference>
<dbReference type="Pfam" id="PF02833">
    <property type="entry name" value="DHHA2"/>
    <property type="match status" value="1"/>
</dbReference>
<dbReference type="SMART" id="SM01131">
    <property type="entry name" value="DHHA2"/>
    <property type="match status" value="1"/>
</dbReference>
<dbReference type="SUPFAM" id="SSF64182">
    <property type="entry name" value="DHH phosphoesterases"/>
    <property type="match status" value="1"/>
</dbReference>
<feature type="chain" id="PRO_0000158584" description="Probable manganese-dependent inorganic pyrophosphatase">
    <location>
        <begin position="1"/>
        <end position="309"/>
    </location>
</feature>
<feature type="binding site" evidence="1">
    <location>
        <position position="9"/>
    </location>
    <ligand>
        <name>Mn(2+)</name>
        <dbReference type="ChEBI" id="CHEBI:29035"/>
        <label>1</label>
    </ligand>
</feature>
<feature type="binding site" evidence="1">
    <location>
        <position position="13"/>
    </location>
    <ligand>
        <name>Mn(2+)</name>
        <dbReference type="ChEBI" id="CHEBI:29035"/>
        <label>1</label>
    </ligand>
</feature>
<feature type="binding site" evidence="1">
    <location>
        <position position="15"/>
    </location>
    <ligand>
        <name>Mn(2+)</name>
        <dbReference type="ChEBI" id="CHEBI:29035"/>
        <label>2</label>
    </ligand>
</feature>
<feature type="binding site" evidence="1">
    <location>
        <position position="75"/>
    </location>
    <ligand>
        <name>Mn(2+)</name>
        <dbReference type="ChEBI" id="CHEBI:29035"/>
        <label>1</label>
    </ligand>
</feature>
<feature type="binding site" evidence="1">
    <location>
        <position position="75"/>
    </location>
    <ligand>
        <name>Mn(2+)</name>
        <dbReference type="ChEBI" id="CHEBI:29035"/>
        <label>2</label>
    </ligand>
</feature>
<feature type="binding site" evidence="1">
    <location>
        <position position="97"/>
    </location>
    <ligand>
        <name>Mn(2+)</name>
        <dbReference type="ChEBI" id="CHEBI:29035"/>
        <label>2</label>
    </ligand>
</feature>
<feature type="binding site" evidence="1">
    <location>
        <position position="149"/>
    </location>
    <ligand>
        <name>Mn(2+)</name>
        <dbReference type="ChEBI" id="CHEBI:29035"/>
        <label>2</label>
    </ligand>
</feature>
<name>PPAC_STAAW</name>
<protein>
    <recommendedName>
        <fullName evidence="1">Probable manganese-dependent inorganic pyrophosphatase</fullName>
        <ecNumber evidence="1">3.6.1.1</ecNumber>
    </recommendedName>
    <alternativeName>
        <fullName evidence="1">Pyrophosphate phospho-hydrolase</fullName>
        <shortName evidence="1">PPase</shortName>
    </alternativeName>
</protein>
<proteinExistence type="inferred from homology"/>
<organism>
    <name type="scientific">Staphylococcus aureus (strain MW2)</name>
    <dbReference type="NCBI Taxonomy" id="196620"/>
    <lineage>
        <taxon>Bacteria</taxon>
        <taxon>Bacillati</taxon>
        <taxon>Bacillota</taxon>
        <taxon>Bacilli</taxon>
        <taxon>Bacillales</taxon>
        <taxon>Staphylococcaceae</taxon>
        <taxon>Staphylococcus</taxon>
    </lineage>
</organism>
<reference key="1">
    <citation type="journal article" date="2002" name="Lancet">
        <title>Genome and virulence determinants of high virulence community-acquired MRSA.</title>
        <authorList>
            <person name="Baba T."/>
            <person name="Takeuchi F."/>
            <person name="Kuroda M."/>
            <person name="Yuzawa H."/>
            <person name="Aoki K."/>
            <person name="Oguchi A."/>
            <person name="Nagai Y."/>
            <person name="Iwama N."/>
            <person name="Asano K."/>
            <person name="Naimi T."/>
            <person name="Kuroda H."/>
            <person name="Cui L."/>
            <person name="Yamamoto K."/>
            <person name="Hiramatsu K."/>
        </authorList>
    </citation>
    <scope>NUCLEOTIDE SEQUENCE [LARGE SCALE GENOMIC DNA]</scope>
    <source>
        <strain>MW2</strain>
    </source>
</reference>
<gene>
    <name evidence="1" type="primary">ppaC</name>
    <name type="ordered locus">MW1860</name>
</gene>
<comment type="catalytic activity">
    <reaction evidence="1">
        <text>diphosphate + H2O = 2 phosphate + H(+)</text>
        <dbReference type="Rhea" id="RHEA:24576"/>
        <dbReference type="ChEBI" id="CHEBI:15377"/>
        <dbReference type="ChEBI" id="CHEBI:15378"/>
        <dbReference type="ChEBI" id="CHEBI:33019"/>
        <dbReference type="ChEBI" id="CHEBI:43474"/>
        <dbReference type="EC" id="3.6.1.1"/>
    </reaction>
</comment>
<comment type="cofactor">
    <cofactor evidence="1">
        <name>Mn(2+)</name>
        <dbReference type="ChEBI" id="CHEBI:29035"/>
    </cofactor>
    <text evidence="1">Binds 2 manganese ions per subunit.</text>
</comment>
<comment type="subcellular location">
    <subcellularLocation>
        <location evidence="1">Cytoplasm</location>
    </subcellularLocation>
</comment>
<comment type="similarity">
    <text evidence="1">Belongs to the PPase class C family.</text>
</comment>
<evidence type="ECO:0000255" key="1">
    <source>
        <dbReference type="HAMAP-Rule" id="MF_00207"/>
    </source>
</evidence>
<accession>P65754</accession>
<accession>Q99SW8</accession>
<keyword id="KW-0963">Cytoplasm</keyword>
<keyword id="KW-0378">Hydrolase</keyword>
<keyword id="KW-0464">Manganese</keyword>
<keyword id="KW-0479">Metal-binding</keyword>